<proteinExistence type="evidence at transcript level"/>
<evidence type="ECO:0000255" key="1">
    <source>
        <dbReference type="PROSITE-ProRule" id="PRU00108"/>
    </source>
</evidence>
<evidence type="ECO:0000256" key="2">
    <source>
        <dbReference type="SAM" id="MobiDB-lite"/>
    </source>
</evidence>
<evidence type="ECO:0000269" key="3">
    <source>
    </source>
</evidence>
<evidence type="ECO:0000269" key="4">
    <source>
    </source>
</evidence>
<evidence type="ECO:0000269" key="5">
    <source>
    </source>
</evidence>
<evidence type="ECO:0000269" key="6">
    <source>
    </source>
</evidence>
<evidence type="ECO:0000303" key="7">
    <source>
    </source>
</evidence>
<evidence type="ECO:0000305" key="8"/>
<evidence type="ECO:0000312" key="9">
    <source>
        <dbReference type="EMBL" id="CAK05487.1"/>
    </source>
</evidence>
<evidence type="ECO:0000312" key="10">
    <source>
        <dbReference type="Proteomes" id="UP000000437"/>
    </source>
</evidence>
<gene>
    <name type="primary">irx5a</name>
    <name evidence="7" type="synonym">iro5</name>
    <name evidence="7" type="synonym">ziro5</name>
</gene>
<reference key="1">
    <citation type="journal article" date="2001" name="Mech. Dev.">
        <title>Expression of two novel zebrafish iroquois homologues (ziro1 and ziro5) during early development of axial structures and central nervous system.</title>
        <authorList>
            <person name="Wang X."/>
            <person name="Emelyanov A."/>
            <person name="Sleptsova-Friedrich I."/>
            <person name="Korzh V."/>
            <person name="Gong Z."/>
        </authorList>
    </citation>
    <scope>NUCLEOTIDE SEQUENCE [MRNA]</scope>
    <scope>DEVELOPMENTAL STAGE</scope>
</reference>
<reference evidence="10" key="2">
    <citation type="journal article" date="2013" name="Nature">
        <title>The zebrafish reference genome sequence and its relationship to the human genome.</title>
        <authorList>
            <person name="Howe K."/>
            <person name="Clark M.D."/>
            <person name="Torroja C.F."/>
            <person name="Torrance J."/>
            <person name="Berthelot C."/>
            <person name="Muffato M."/>
            <person name="Collins J.E."/>
            <person name="Humphray S."/>
            <person name="McLaren K."/>
            <person name="Matthews L."/>
            <person name="McLaren S."/>
            <person name="Sealy I."/>
            <person name="Caccamo M."/>
            <person name="Churcher C."/>
            <person name="Scott C."/>
            <person name="Barrett J.C."/>
            <person name="Koch R."/>
            <person name="Rauch G.J."/>
            <person name="White S."/>
            <person name="Chow W."/>
            <person name="Kilian B."/>
            <person name="Quintais L.T."/>
            <person name="Guerra-Assuncao J.A."/>
            <person name="Zhou Y."/>
            <person name="Gu Y."/>
            <person name="Yen J."/>
            <person name="Vogel J.H."/>
            <person name="Eyre T."/>
            <person name="Redmond S."/>
            <person name="Banerjee R."/>
            <person name="Chi J."/>
            <person name="Fu B."/>
            <person name="Langley E."/>
            <person name="Maguire S.F."/>
            <person name="Laird G.K."/>
            <person name="Lloyd D."/>
            <person name="Kenyon E."/>
            <person name="Donaldson S."/>
            <person name="Sehra H."/>
            <person name="Almeida-King J."/>
            <person name="Loveland J."/>
            <person name="Trevanion S."/>
            <person name="Jones M."/>
            <person name="Quail M."/>
            <person name="Willey D."/>
            <person name="Hunt A."/>
            <person name="Burton J."/>
            <person name="Sims S."/>
            <person name="McLay K."/>
            <person name="Plumb B."/>
            <person name="Davis J."/>
            <person name="Clee C."/>
            <person name="Oliver K."/>
            <person name="Clark R."/>
            <person name="Riddle C."/>
            <person name="Elliot D."/>
            <person name="Threadgold G."/>
            <person name="Harden G."/>
            <person name="Ware D."/>
            <person name="Begum S."/>
            <person name="Mortimore B."/>
            <person name="Kerry G."/>
            <person name="Heath P."/>
            <person name="Phillimore B."/>
            <person name="Tracey A."/>
            <person name="Corby N."/>
            <person name="Dunn M."/>
            <person name="Johnson C."/>
            <person name="Wood J."/>
            <person name="Clark S."/>
            <person name="Pelan S."/>
            <person name="Griffiths G."/>
            <person name="Smith M."/>
            <person name="Glithero R."/>
            <person name="Howden P."/>
            <person name="Barker N."/>
            <person name="Lloyd C."/>
            <person name="Stevens C."/>
            <person name="Harley J."/>
            <person name="Holt K."/>
            <person name="Panagiotidis G."/>
            <person name="Lovell J."/>
            <person name="Beasley H."/>
            <person name="Henderson C."/>
            <person name="Gordon D."/>
            <person name="Auger K."/>
            <person name="Wright D."/>
            <person name="Collins J."/>
            <person name="Raisen C."/>
            <person name="Dyer L."/>
            <person name="Leung K."/>
            <person name="Robertson L."/>
            <person name="Ambridge K."/>
            <person name="Leongamornlert D."/>
            <person name="McGuire S."/>
            <person name="Gilderthorp R."/>
            <person name="Griffiths C."/>
            <person name="Manthravadi D."/>
            <person name="Nichol S."/>
            <person name="Barker G."/>
            <person name="Whitehead S."/>
            <person name="Kay M."/>
            <person name="Brown J."/>
            <person name="Murnane C."/>
            <person name="Gray E."/>
            <person name="Humphries M."/>
            <person name="Sycamore N."/>
            <person name="Barker D."/>
            <person name="Saunders D."/>
            <person name="Wallis J."/>
            <person name="Babbage A."/>
            <person name="Hammond S."/>
            <person name="Mashreghi-Mohammadi M."/>
            <person name="Barr L."/>
            <person name="Martin S."/>
            <person name="Wray P."/>
            <person name="Ellington A."/>
            <person name="Matthews N."/>
            <person name="Ellwood M."/>
            <person name="Woodmansey R."/>
            <person name="Clark G."/>
            <person name="Cooper J."/>
            <person name="Tromans A."/>
            <person name="Grafham D."/>
            <person name="Skuce C."/>
            <person name="Pandian R."/>
            <person name="Andrews R."/>
            <person name="Harrison E."/>
            <person name="Kimberley A."/>
            <person name="Garnett J."/>
            <person name="Fosker N."/>
            <person name="Hall R."/>
            <person name="Garner P."/>
            <person name="Kelly D."/>
            <person name="Bird C."/>
            <person name="Palmer S."/>
            <person name="Gehring I."/>
            <person name="Berger A."/>
            <person name="Dooley C.M."/>
            <person name="Ersan-Urun Z."/>
            <person name="Eser C."/>
            <person name="Geiger H."/>
            <person name="Geisler M."/>
            <person name="Karotki L."/>
            <person name="Kirn A."/>
            <person name="Konantz J."/>
            <person name="Konantz M."/>
            <person name="Oberlander M."/>
            <person name="Rudolph-Geiger S."/>
            <person name="Teucke M."/>
            <person name="Lanz C."/>
            <person name="Raddatz G."/>
            <person name="Osoegawa K."/>
            <person name="Zhu B."/>
            <person name="Rapp A."/>
            <person name="Widaa S."/>
            <person name="Langford C."/>
            <person name="Yang F."/>
            <person name="Schuster S.C."/>
            <person name="Carter N.P."/>
            <person name="Harrow J."/>
            <person name="Ning Z."/>
            <person name="Herrero J."/>
            <person name="Searle S.M."/>
            <person name="Enright A."/>
            <person name="Geisler R."/>
            <person name="Plasterk R.H."/>
            <person name="Lee C."/>
            <person name="Westerfield M."/>
            <person name="de Jong P.J."/>
            <person name="Zon L.I."/>
            <person name="Postlethwait J.H."/>
            <person name="Nusslein-Volhard C."/>
            <person name="Hubbard T.J."/>
            <person name="Roest Crollius H."/>
            <person name="Rogers J."/>
            <person name="Stemple D.L."/>
        </authorList>
    </citation>
    <scope>NUCLEOTIDE SEQUENCE [LARGE SCALE GENOMIC DNA]</scope>
    <source>
        <strain evidence="10">Tuebingen</strain>
    </source>
</reference>
<reference evidence="9" key="3">
    <citation type="submission" date="2007-01" db="EMBL/GenBank/DDBJ databases">
        <authorList>
            <person name="Clark S."/>
        </authorList>
    </citation>
    <scope>NUCLEOTIDE SEQUENCE [GENOMIC DNA]</scope>
</reference>
<reference evidence="8" key="4">
    <citation type="journal article" date="2010" name="J. Anat.">
        <title>Comparison of Iroquois gene expression in limbs/fins of vertebrate embryos.</title>
        <authorList>
            <person name="McDonald L.A."/>
            <person name="Gerrelli D."/>
            <person name="Fok Y."/>
            <person name="Hurst L.D."/>
            <person name="Tickle C."/>
        </authorList>
    </citation>
    <scope>DEVELOPMENTAL STAGE</scope>
</reference>
<reference evidence="8" key="5">
    <citation type="journal article" date="2015" name="Dev. Cell">
        <title>Iroquois Proteins Promote Skeletal Joint Formation by Maintaining Chondrocytes in an Immature State.</title>
        <authorList>
            <person name="Askary A."/>
            <person name="Mork L."/>
            <person name="Paul S."/>
            <person name="He X."/>
            <person name="Izuhara A.K."/>
            <person name="Gopalakrishnan S."/>
            <person name="Ichida J.K."/>
            <person name="McMahon A.P."/>
            <person name="Dabizljevic S."/>
            <person name="Dale R."/>
            <person name="Mariani F.V."/>
            <person name="Crump J.G."/>
        </authorList>
    </citation>
    <scope>FUNCTION</scope>
    <scope>DEVELOPMENTAL STAGE</scope>
</reference>
<reference evidence="8" key="6">
    <citation type="journal article" date="2021" name="Hum. Mol. Genet.">
        <title>A duplication on chromosome 16q12 affecting the IRXB gene cluster is associated with autosomal dominant cone dystrophy with early tritanopic color vision defect.</title>
        <authorList>
            <person name="Kohl S."/>
            <person name="Llavona P."/>
            <person name="Sauer A."/>
            <person name="Reuter P."/>
            <person name="Weisschuh N."/>
            <person name="Kempf M."/>
            <person name="Dehmelt F.A."/>
            <person name="Arrenberg A.B."/>
            <person name="Sliesoraityte I."/>
            <person name="Zrenner E."/>
            <person name="van Schooneveld M.J."/>
            <person name="Rudolph G."/>
            <person name="Kuehlewein L."/>
            <person name="Wissinger B."/>
        </authorList>
    </citation>
    <scope>FUNCTION</scope>
</reference>
<sequence length="446" mass="48373">MAYPQGYLYQPSASLALYSCPAYSTSVISGPRTEELGRSSSGSAFAPYAGSTAFTSASPGYNSHLPYSADAAAAATFTSYVSSPYDHTTGMAGSIGYHPYAAPLGSYPYGDPAYRKNATRDATATLKAWLNEHRKNPYPTKGEKIMLAIITKMTLTQVSTWFANARRRLKKENKMTWTPRNRSEDEEEDENIDLEKNDDDEPNKPTDKGDSTDTEADHKLINPGEIPCDRFKDETHSKDLDPPLTDSELKEAEERTDLLAEQAKPTTSSPSVLQRGSDLITQEKPSEPGHAASTGNSNVTSVIHSPPSAPKPKLWSLAEIATSSDRCKGSSEASQAAGLSQSTVIASAASPTRSSPQCPLPNNTVLSRPIYYTSPFYPGYTNYSTFGHLHSSHGTNTSSTAHFNGLSQTVLNRAEALVRESKVRSQTQVDLCKDSPYELKKGMSNI</sequence>
<feature type="chain" id="PRO_0000458115" description="Iroquois homeobox protein 5a">
    <location>
        <begin position="1"/>
        <end position="446"/>
    </location>
</feature>
<feature type="DNA-binding region" description="Homeobox" evidence="1">
    <location>
        <begin position="117"/>
        <end position="173"/>
    </location>
</feature>
<feature type="region of interest" description="Disordered" evidence="2">
    <location>
        <begin position="175"/>
        <end position="312"/>
    </location>
</feature>
<feature type="compositionally biased region" description="Acidic residues" evidence="2">
    <location>
        <begin position="184"/>
        <end position="201"/>
    </location>
</feature>
<feature type="compositionally biased region" description="Basic and acidic residues" evidence="2">
    <location>
        <begin position="202"/>
        <end position="220"/>
    </location>
</feature>
<feature type="compositionally biased region" description="Basic and acidic residues" evidence="2">
    <location>
        <begin position="227"/>
        <end position="258"/>
    </location>
</feature>
<feature type="compositionally biased region" description="Polar residues" evidence="2">
    <location>
        <begin position="264"/>
        <end position="274"/>
    </location>
</feature>
<feature type="compositionally biased region" description="Polar residues" evidence="2">
    <location>
        <begin position="293"/>
        <end position="303"/>
    </location>
</feature>
<protein>
    <recommendedName>
        <fullName>Iroquois homeobox protein 5a</fullName>
    </recommendedName>
</protein>
<dbReference type="EMBL" id="BX005202">
    <property type="protein sequence ID" value="CAK05487.1"/>
    <property type="molecule type" value="Genomic_DNA"/>
</dbReference>
<dbReference type="EMBL" id="BX255967">
    <property type="status" value="NOT_ANNOTATED_CDS"/>
    <property type="molecule type" value="Genomic_DNA"/>
</dbReference>
<dbReference type="RefSeq" id="NP_001038692.1">
    <property type="nucleotide sequence ID" value="NM_001045227.1"/>
</dbReference>
<dbReference type="SMR" id="Q1LXU5"/>
<dbReference type="FunCoup" id="Q1LXU5">
    <property type="interactions" value="37"/>
</dbReference>
<dbReference type="STRING" id="7955.ENSDARP00000043856"/>
<dbReference type="PaxDb" id="7955-ENSDARP00000043856"/>
<dbReference type="DNASU" id="573346"/>
<dbReference type="Ensembl" id="ENSDART00000043857">
    <property type="protein sequence ID" value="ENSDARP00000043856"/>
    <property type="gene ID" value="ENSDARG00000034043"/>
</dbReference>
<dbReference type="GeneID" id="573346"/>
<dbReference type="KEGG" id="dre:573346"/>
<dbReference type="AGR" id="ZFIN:ZDB-GENE-010716-2"/>
<dbReference type="CTD" id="573346"/>
<dbReference type="ZFIN" id="ZDB-GENE-010716-2">
    <property type="gene designation" value="irx5a"/>
</dbReference>
<dbReference type="eggNOG" id="KOG0773">
    <property type="taxonomic scope" value="Eukaryota"/>
</dbReference>
<dbReference type="HOGENOM" id="CLU_048118_0_0_1"/>
<dbReference type="OMA" id="CPFPNSA"/>
<dbReference type="OrthoDB" id="5399138at2759"/>
<dbReference type="TreeFam" id="TF319371"/>
<dbReference type="PRO" id="PR:Q1LXU5"/>
<dbReference type="Proteomes" id="UP000000437">
    <property type="component" value="Chromosome 7"/>
</dbReference>
<dbReference type="Bgee" id="ENSDARG00000034043">
    <property type="expression patterns" value="Expressed in cardiac ventricle and 34 other cell types or tissues"/>
</dbReference>
<dbReference type="ExpressionAtlas" id="Q1LXU5">
    <property type="expression patterns" value="baseline"/>
</dbReference>
<dbReference type="GO" id="GO:0005634">
    <property type="term" value="C:nucleus"/>
    <property type="evidence" value="ECO:0000318"/>
    <property type="project" value="GO_Central"/>
</dbReference>
<dbReference type="GO" id="GO:0000981">
    <property type="term" value="F:DNA-binding transcription factor activity, RNA polymerase II-specific"/>
    <property type="evidence" value="ECO:0000318"/>
    <property type="project" value="GO_Central"/>
</dbReference>
<dbReference type="GO" id="GO:0000978">
    <property type="term" value="F:RNA polymerase II cis-regulatory region sequence-specific DNA binding"/>
    <property type="evidence" value="ECO:0000318"/>
    <property type="project" value="GO_Central"/>
</dbReference>
<dbReference type="GO" id="GO:0048468">
    <property type="term" value="P:cell development"/>
    <property type="evidence" value="ECO:0000318"/>
    <property type="project" value="GO_Central"/>
</dbReference>
<dbReference type="GO" id="GO:0072498">
    <property type="term" value="P:embryonic skeletal joint development"/>
    <property type="evidence" value="ECO:0000316"/>
    <property type="project" value="ZFIN"/>
</dbReference>
<dbReference type="GO" id="GO:0030182">
    <property type="term" value="P:neuron differentiation"/>
    <property type="evidence" value="ECO:0000318"/>
    <property type="project" value="GO_Central"/>
</dbReference>
<dbReference type="GO" id="GO:0032330">
    <property type="term" value="P:regulation of chondrocyte differentiation"/>
    <property type="evidence" value="ECO:0000316"/>
    <property type="project" value="ZFIN"/>
</dbReference>
<dbReference type="GO" id="GO:0006357">
    <property type="term" value="P:regulation of transcription by RNA polymerase II"/>
    <property type="evidence" value="ECO:0000318"/>
    <property type="project" value="GO_Central"/>
</dbReference>
<dbReference type="GO" id="GO:0007601">
    <property type="term" value="P:visual perception"/>
    <property type="evidence" value="ECO:0000316"/>
    <property type="project" value="UniProtKB"/>
</dbReference>
<dbReference type="CDD" id="cd00086">
    <property type="entry name" value="homeodomain"/>
    <property type="match status" value="1"/>
</dbReference>
<dbReference type="FunFam" id="1.10.10.60:FF:000003">
    <property type="entry name" value="Iroquois-class homeobox protein IRX"/>
    <property type="match status" value="1"/>
</dbReference>
<dbReference type="Gene3D" id="1.10.10.60">
    <property type="entry name" value="Homeodomain-like"/>
    <property type="match status" value="1"/>
</dbReference>
<dbReference type="InterPro" id="IPR001356">
    <property type="entry name" value="HD"/>
</dbReference>
<dbReference type="InterPro" id="IPR017970">
    <property type="entry name" value="Homeobox_CS"/>
</dbReference>
<dbReference type="InterPro" id="IPR009057">
    <property type="entry name" value="Homeodomain-like_sf"/>
</dbReference>
<dbReference type="InterPro" id="IPR003893">
    <property type="entry name" value="Iroquois_homeo"/>
</dbReference>
<dbReference type="InterPro" id="IPR008422">
    <property type="entry name" value="KN_HD"/>
</dbReference>
<dbReference type="PANTHER" id="PTHR11211">
    <property type="entry name" value="IROQUOIS-CLASS HOMEODOMAIN PROTEIN IRX"/>
    <property type="match status" value="1"/>
</dbReference>
<dbReference type="PANTHER" id="PTHR11211:SF17">
    <property type="entry name" value="IROQUOIS-CLASS HOMEODOMAIN PROTEIN IRX-5"/>
    <property type="match status" value="1"/>
</dbReference>
<dbReference type="Pfam" id="PF05920">
    <property type="entry name" value="Homeobox_KN"/>
    <property type="match status" value="1"/>
</dbReference>
<dbReference type="SMART" id="SM00389">
    <property type="entry name" value="HOX"/>
    <property type="match status" value="1"/>
</dbReference>
<dbReference type="SMART" id="SM00548">
    <property type="entry name" value="IRO"/>
    <property type="match status" value="1"/>
</dbReference>
<dbReference type="SUPFAM" id="SSF46689">
    <property type="entry name" value="Homeodomain-like"/>
    <property type="match status" value="1"/>
</dbReference>
<dbReference type="PROSITE" id="PS00027">
    <property type="entry name" value="HOMEOBOX_1"/>
    <property type="match status" value="1"/>
</dbReference>
<dbReference type="PROSITE" id="PS50071">
    <property type="entry name" value="HOMEOBOX_2"/>
    <property type="match status" value="1"/>
</dbReference>
<organism evidence="10">
    <name type="scientific">Danio rerio</name>
    <name type="common">Zebrafish</name>
    <name type="synonym">Brachydanio rerio</name>
    <dbReference type="NCBI Taxonomy" id="7955"/>
    <lineage>
        <taxon>Eukaryota</taxon>
        <taxon>Metazoa</taxon>
        <taxon>Chordata</taxon>
        <taxon>Craniata</taxon>
        <taxon>Vertebrata</taxon>
        <taxon>Euteleostomi</taxon>
        <taxon>Actinopterygii</taxon>
        <taxon>Neopterygii</taxon>
        <taxon>Teleostei</taxon>
        <taxon>Ostariophysi</taxon>
        <taxon>Cypriniformes</taxon>
        <taxon>Danionidae</taxon>
        <taxon>Danioninae</taxon>
        <taxon>Danio</taxon>
    </lineage>
</organism>
<name>IRX5A_DANRE</name>
<keyword id="KW-0238">DNA-binding</keyword>
<keyword id="KW-0371">Homeobox</keyword>
<keyword id="KW-0539">Nucleus</keyword>
<keyword id="KW-1185">Reference proteome</keyword>
<comment type="function">
    <text evidence="5 6">Transcription factor (PubMed:26555055). Binds to consensus iroquois binding site (IBS) motifs 5'-ACANNTGT-3' or 5'-ACANNNTGT-3' in regulatory elements of target genes (PubMed:26555055). Required, together with irx7, for hyoid joint formation; they act cell autonomously to repress expression of cartilage matrix genes, such as collagen col2a1a, within immature chondrocytes of the joint interzone (PubMed:26555055). May compete with or modify Sox9a activity, thereby reducing Sox9a-mediated activation of col2a1a (PubMed:26555055). Probably acts in the developing hyoid joint downstream of Bmp signaling (PubMed:26555055). In concert with irx6a, plays a role in visual performance (PubMed:33891002).</text>
</comment>
<comment type="subcellular location">
    <subcellularLocation>
        <location evidence="1">Nucleus</location>
    </subcellularLocation>
</comment>
<comment type="developmental stage">
    <text evidence="3 4 5">Earliest expression is at 8 hours post fertilization (hpf) in the midline and limited to the notochord precursor by 10 hpf (PubMed:11429297). By 11 hpf, expressed in the prospective midbrain and hindbrain (PubMed:11429297). By 14 hpf, expression is highest in rhombomere 2 (r2) of the hindbrain, lower in r1 and r3 and even lower in r4 and r5 (PubMed:20408909). By 17 hpf, expression in the notochord is restricted to a region anterior to the chordoneural hinge (CNH) (PubMed:11429297). Expressed in the pectoral fins at 36 hpf and at a much lower level at 48 hpf (PubMed:20408909). Expressed in the diencephalon above the ventral flexure, midbrain and hindbrain at 48 hpf (PubMed:11429297). Expressed at the onset of chondrogenesis, in the developing hyoid joint, at 53 hpf, overlapping with irx7 (PubMed:26555055). Also expressed in a zone connecting the nascent hyomandibular and symplectic cartilages (PubMed:26555055). By 72 hpf, expression is further restricted to cells within and surrounding the hyoid joint, with additional expression along the posterior margin of the hyoid arch (PubMed:26555055).</text>
</comment>
<comment type="similarity">
    <text evidence="8">Belongs to the TALE/IRO homeobox family.</text>
</comment>
<accession>Q1LXU5</accession>
<accession>Q1LYH4</accession>